<gene>
    <name type="ordered locus">Veis_1517</name>
</gene>
<comment type="similarity">
    <text evidence="1">Belongs to the UPF0301 (AlgH) family.</text>
</comment>
<proteinExistence type="inferred from homology"/>
<organism>
    <name type="scientific">Verminephrobacter eiseniae (strain EF01-2)</name>
    <dbReference type="NCBI Taxonomy" id="391735"/>
    <lineage>
        <taxon>Bacteria</taxon>
        <taxon>Pseudomonadati</taxon>
        <taxon>Pseudomonadota</taxon>
        <taxon>Betaproteobacteria</taxon>
        <taxon>Burkholderiales</taxon>
        <taxon>Comamonadaceae</taxon>
        <taxon>Verminephrobacter</taxon>
    </lineage>
</organism>
<sequence>MSFASASINLTHHFLIAMPGLEDAAFARSVVYLCEHSERGALGLIINKPTDITLKGLFDKVDLSLRREDLGREPVFQGGPVQTERGFVLHEPMPDEGRSATDGSAYASTMVIPGGLAMTTSKDVLEALSTGAGPRRVLITLGYSSWGGGQLESELAENAWLTVAADLSVIFDTPAPERYDRALSLLGLEVWMLSPSAGHA</sequence>
<feature type="chain" id="PRO_1000046689" description="UPF0301 protein Veis_1517">
    <location>
        <begin position="1"/>
        <end position="200"/>
    </location>
</feature>
<evidence type="ECO:0000255" key="1">
    <source>
        <dbReference type="HAMAP-Rule" id="MF_00758"/>
    </source>
</evidence>
<accession>A1WI20</accession>
<keyword id="KW-1185">Reference proteome</keyword>
<protein>
    <recommendedName>
        <fullName evidence="1">UPF0301 protein Veis_1517</fullName>
    </recommendedName>
</protein>
<name>Y1517_VEREI</name>
<reference key="1">
    <citation type="submission" date="2006-12" db="EMBL/GenBank/DDBJ databases">
        <title>Complete sequence of chromosome 1 of Verminephrobacter eiseniae EF01-2.</title>
        <authorList>
            <person name="Copeland A."/>
            <person name="Lucas S."/>
            <person name="Lapidus A."/>
            <person name="Barry K."/>
            <person name="Detter J.C."/>
            <person name="Glavina del Rio T."/>
            <person name="Dalin E."/>
            <person name="Tice H."/>
            <person name="Pitluck S."/>
            <person name="Chertkov O."/>
            <person name="Brettin T."/>
            <person name="Bruce D."/>
            <person name="Han C."/>
            <person name="Tapia R."/>
            <person name="Gilna P."/>
            <person name="Schmutz J."/>
            <person name="Larimer F."/>
            <person name="Land M."/>
            <person name="Hauser L."/>
            <person name="Kyrpides N."/>
            <person name="Kim E."/>
            <person name="Stahl D."/>
            <person name="Richardson P."/>
        </authorList>
    </citation>
    <scope>NUCLEOTIDE SEQUENCE [LARGE SCALE GENOMIC DNA]</scope>
    <source>
        <strain>EF01-2</strain>
    </source>
</reference>
<dbReference type="EMBL" id="CP000542">
    <property type="protein sequence ID" value="ABM57277.1"/>
    <property type="molecule type" value="Genomic_DNA"/>
</dbReference>
<dbReference type="RefSeq" id="WP_011809284.1">
    <property type="nucleotide sequence ID" value="NC_008786.1"/>
</dbReference>
<dbReference type="SMR" id="A1WI20"/>
<dbReference type="STRING" id="391735.Veis_1517"/>
<dbReference type="GeneID" id="76460138"/>
<dbReference type="KEGG" id="vei:Veis_1517"/>
<dbReference type="eggNOG" id="COG1678">
    <property type="taxonomic scope" value="Bacteria"/>
</dbReference>
<dbReference type="HOGENOM" id="CLU_057596_1_0_4"/>
<dbReference type="OrthoDB" id="9807486at2"/>
<dbReference type="Proteomes" id="UP000000374">
    <property type="component" value="Chromosome"/>
</dbReference>
<dbReference type="GO" id="GO:0005829">
    <property type="term" value="C:cytosol"/>
    <property type="evidence" value="ECO:0007669"/>
    <property type="project" value="TreeGrafter"/>
</dbReference>
<dbReference type="Gene3D" id="3.40.1740.10">
    <property type="entry name" value="VC0467-like"/>
    <property type="match status" value="1"/>
</dbReference>
<dbReference type="HAMAP" id="MF_00758">
    <property type="entry name" value="UPF0301"/>
    <property type="match status" value="1"/>
</dbReference>
<dbReference type="InterPro" id="IPR003774">
    <property type="entry name" value="AlgH-like"/>
</dbReference>
<dbReference type="NCBIfam" id="NF001266">
    <property type="entry name" value="PRK00228.1-1"/>
    <property type="match status" value="1"/>
</dbReference>
<dbReference type="PANTHER" id="PTHR30327">
    <property type="entry name" value="UNCHARACTERIZED PROTEIN YQGE"/>
    <property type="match status" value="1"/>
</dbReference>
<dbReference type="PANTHER" id="PTHR30327:SF1">
    <property type="entry name" value="UPF0301 PROTEIN YQGE"/>
    <property type="match status" value="1"/>
</dbReference>
<dbReference type="Pfam" id="PF02622">
    <property type="entry name" value="DUF179"/>
    <property type="match status" value="1"/>
</dbReference>
<dbReference type="SUPFAM" id="SSF143456">
    <property type="entry name" value="VC0467-like"/>
    <property type="match status" value="1"/>
</dbReference>